<protein>
    <recommendedName>
        <fullName evidence="1">Co-chaperonin GroES</fullName>
    </recommendedName>
    <alternativeName>
        <fullName evidence="1">10 kDa chaperonin</fullName>
    </alternativeName>
    <alternativeName>
        <fullName evidence="1">Chaperonin-10</fullName>
        <shortName evidence="1">Cpn10</shortName>
    </alternativeName>
</protein>
<organism>
    <name type="scientific">Legionella jeonii</name>
    <dbReference type="NCBI Taxonomy" id="2728"/>
    <lineage>
        <taxon>Bacteria</taxon>
        <taxon>Pseudomonadati</taxon>
        <taxon>Pseudomonadota</taxon>
        <taxon>Gammaproteobacteria</taxon>
        <taxon>Legionellales</taxon>
        <taxon>Legionellaceae</taxon>
        <taxon>Legionella</taxon>
    </lineage>
</organism>
<name>CH10_LEGJE</name>
<feature type="chain" id="PRO_0000174684" description="Co-chaperonin GroES">
    <location>
        <begin position="1"/>
        <end position="96"/>
    </location>
</feature>
<comment type="function">
    <text evidence="1">Together with the chaperonin GroEL, plays an essential role in assisting protein folding. The GroEL-GroES system forms a nano-cage that allows encapsulation of the non-native substrate proteins and provides a physical environment optimized to promote and accelerate protein folding. GroES binds to the apical surface of the GroEL ring, thereby capping the opening of the GroEL channel.</text>
</comment>
<comment type="subunit">
    <text evidence="1">Heptamer of 7 subunits arranged in a ring. Interacts with the chaperonin GroEL.</text>
</comment>
<comment type="subcellular location">
    <subcellularLocation>
        <location evidence="1">Cytoplasm</location>
    </subcellularLocation>
</comment>
<comment type="similarity">
    <text evidence="1 2">Belongs to the GroES chaperonin family.</text>
</comment>
<sequence length="96" mass="10618">MKIRPLHDRVVVRRLEEERTTAGWIVIPDSATEKPMRGEIIAIGAGKILDNGDVRAFVVKVGDVVLFGKYSGTEVKVAGQELVVMREDDIMGVIEK</sequence>
<accession>P26005</accession>
<keyword id="KW-0143">Chaperone</keyword>
<keyword id="KW-0963">Cytoplasm</keyword>
<dbReference type="EMBL" id="M86549">
    <property type="protein sequence ID" value="AAC09380.1"/>
    <property type="molecule type" value="Genomic_DNA"/>
</dbReference>
<dbReference type="PIR" id="JC2561">
    <property type="entry name" value="JC2561"/>
</dbReference>
<dbReference type="SMR" id="P26005"/>
<dbReference type="GO" id="GO:0005737">
    <property type="term" value="C:cytoplasm"/>
    <property type="evidence" value="ECO:0007669"/>
    <property type="project" value="UniProtKB-SubCell"/>
</dbReference>
<dbReference type="GO" id="GO:0005524">
    <property type="term" value="F:ATP binding"/>
    <property type="evidence" value="ECO:0007669"/>
    <property type="project" value="InterPro"/>
</dbReference>
<dbReference type="GO" id="GO:0046872">
    <property type="term" value="F:metal ion binding"/>
    <property type="evidence" value="ECO:0007669"/>
    <property type="project" value="TreeGrafter"/>
</dbReference>
<dbReference type="GO" id="GO:0044183">
    <property type="term" value="F:protein folding chaperone"/>
    <property type="evidence" value="ECO:0007669"/>
    <property type="project" value="InterPro"/>
</dbReference>
<dbReference type="GO" id="GO:0051087">
    <property type="term" value="F:protein-folding chaperone binding"/>
    <property type="evidence" value="ECO:0007669"/>
    <property type="project" value="TreeGrafter"/>
</dbReference>
<dbReference type="GO" id="GO:0051082">
    <property type="term" value="F:unfolded protein binding"/>
    <property type="evidence" value="ECO:0007669"/>
    <property type="project" value="TreeGrafter"/>
</dbReference>
<dbReference type="GO" id="GO:0051085">
    <property type="term" value="P:chaperone cofactor-dependent protein refolding"/>
    <property type="evidence" value="ECO:0007669"/>
    <property type="project" value="TreeGrafter"/>
</dbReference>
<dbReference type="CDD" id="cd00320">
    <property type="entry name" value="cpn10"/>
    <property type="match status" value="1"/>
</dbReference>
<dbReference type="FunFam" id="2.30.33.40:FF:000001">
    <property type="entry name" value="10 kDa chaperonin"/>
    <property type="match status" value="1"/>
</dbReference>
<dbReference type="Gene3D" id="2.30.33.40">
    <property type="entry name" value="GroES chaperonin"/>
    <property type="match status" value="1"/>
</dbReference>
<dbReference type="HAMAP" id="MF_00580">
    <property type="entry name" value="CH10"/>
    <property type="match status" value="1"/>
</dbReference>
<dbReference type="InterPro" id="IPR020818">
    <property type="entry name" value="Chaperonin_GroES"/>
</dbReference>
<dbReference type="InterPro" id="IPR037124">
    <property type="entry name" value="Chaperonin_GroES_sf"/>
</dbReference>
<dbReference type="InterPro" id="IPR018369">
    <property type="entry name" value="Chaprnonin_Cpn10_CS"/>
</dbReference>
<dbReference type="InterPro" id="IPR011032">
    <property type="entry name" value="GroES-like_sf"/>
</dbReference>
<dbReference type="NCBIfam" id="NF001527">
    <property type="entry name" value="PRK00364.1-2"/>
    <property type="match status" value="1"/>
</dbReference>
<dbReference type="NCBIfam" id="NF001531">
    <property type="entry name" value="PRK00364.2-2"/>
    <property type="match status" value="1"/>
</dbReference>
<dbReference type="NCBIfam" id="NF001533">
    <property type="entry name" value="PRK00364.2-4"/>
    <property type="match status" value="1"/>
</dbReference>
<dbReference type="PANTHER" id="PTHR10772">
    <property type="entry name" value="10 KDA HEAT SHOCK PROTEIN"/>
    <property type="match status" value="1"/>
</dbReference>
<dbReference type="PANTHER" id="PTHR10772:SF58">
    <property type="entry name" value="CO-CHAPERONIN GROES"/>
    <property type="match status" value="1"/>
</dbReference>
<dbReference type="Pfam" id="PF00166">
    <property type="entry name" value="Cpn10"/>
    <property type="match status" value="1"/>
</dbReference>
<dbReference type="PRINTS" id="PR00297">
    <property type="entry name" value="CHAPERONIN10"/>
</dbReference>
<dbReference type="SMART" id="SM00883">
    <property type="entry name" value="Cpn10"/>
    <property type="match status" value="1"/>
</dbReference>
<dbReference type="SUPFAM" id="SSF50129">
    <property type="entry name" value="GroES-like"/>
    <property type="match status" value="1"/>
</dbReference>
<dbReference type="PROSITE" id="PS00681">
    <property type="entry name" value="CHAPERONINS_CPN10"/>
    <property type="match status" value="1"/>
</dbReference>
<evidence type="ECO:0000255" key="1">
    <source>
        <dbReference type="HAMAP-Rule" id="MF_00580"/>
    </source>
</evidence>
<evidence type="ECO:0000305" key="2"/>
<gene>
    <name evidence="1" type="primary">groES</name>
    <name evidence="1" type="synonym">groS</name>
</gene>
<reference key="1">
    <citation type="journal article" date="1991" name="Endocyt. Cell Res.">
        <title>Nucleotide sequence and temperature-dependent expression of groEL gene isolated from symbiotic bacteria of Amoeba proteus.</title>
        <authorList>
            <person name="Ahn T.I."/>
            <person name="Leeu H.K."/>
            <person name="Kwak I.H."/>
            <person name="Jeon K.W."/>
        </authorList>
    </citation>
    <scope>NUCLEOTIDE SEQUENCE [GENOMIC DNA]</scope>
</reference>
<proteinExistence type="inferred from homology"/>